<comment type="function">
    <text>Can digest both p-nitro-phenyl-alpha-D-mannoside and high mannose oligosaccharide (Man(8)-GlcNAc(2)). May be involved in sperm maturation. Has a possible role in specific sperm-egg interaction since sperm surface mannosidase acts like a receptor for mannose-containing oligosaccharides located on the zona pellucida.</text>
</comment>
<comment type="catalytic activity">
    <reaction>
        <text>Hydrolysis of terminal, non-reducing alpha-D-mannose residues in alpha-D-mannosides.</text>
        <dbReference type="EC" id="3.2.1.24"/>
    </reaction>
</comment>
<comment type="cofactor">
    <cofactor evidence="1">
        <name>Zn(2+)</name>
        <dbReference type="ChEBI" id="CHEBI:29105"/>
    </cofactor>
    <text evidence="1">Binds 1 zinc ion per subunit.</text>
</comment>
<comment type="biophysicochemical properties">
    <phDependence>
        <text>Optimum pH is 6.5.</text>
    </phDependence>
</comment>
<comment type="subcellular location">
    <subcellularLocation>
        <location>Secreted</location>
    </subcellularLocation>
    <text>Found at the sperm surface as a 27 kDa fragment.</text>
</comment>
<comment type="tissue specificity">
    <text>Specific to the caput and corpus of the epididymis.</text>
</comment>
<comment type="PTM">
    <text>Processed into a 27 kDa fragment localized on the equatorial segment and the apical rim of the head of mature sperm.</text>
</comment>
<comment type="similarity">
    <text evidence="4">Belongs to the glycosyl hydrolase 38 family.</text>
</comment>
<comment type="sequence caution" evidence="4">
    <conflict type="erroneous initiation">
        <sequence resource="EMBL-CDS" id="BAA05877"/>
    </conflict>
</comment>
<feature type="signal peptide">
    <location>
        <begin position="1"/>
        <end position="21"/>
    </location>
</feature>
<feature type="chain" id="PRO_0000012079" description="Epididymis-specific alpha-mannosidase">
    <location>
        <begin position="22"/>
        <end position="995"/>
    </location>
</feature>
<feature type="region of interest" description="Disordered" evidence="3">
    <location>
        <begin position="956"/>
        <end position="977"/>
    </location>
</feature>
<feature type="active site" description="Nucleophile" evidence="1">
    <location>
        <position position="151"/>
    </location>
</feature>
<feature type="binding site" evidence="1">
    <location>
        <position position="36"/>
    </location>
    <ligand>
        <name>Zn(2+)</name>
        <dbReference type="ChEBI" id="CHEBI:29105"/>
    </ligand>
</feature>
<feature type="binding site" evidence="1">
    <location>
        <position position="38"/>
    </location>
    <ligand>
        <name>Zn(2+)</name>
        <dbReference type="ChEBI" id="CHEBI:29105"/>
    </ligand>
</feature>
<feature type="binding site" evidence="1">
    <location>
        <position position="151"/>
    </location>
    <ligand>
        <name>Zn(2+)</name>
        <dbReference type="ChEBI" id="CHEBI:29105"/>
    </ligand>
</feature>
<feature type="binding site" evidence="1">
    <location>
        <position position="411"/>
    </location>
    <ligand>
        <name>Zn(2+)</name>
        <dbReference type="ChEBI" id="CHEBI:29105"/>
    </ligand>
</feature>
<feature type="glycosylation site" description="N-linked (GlcNAc...) asparagine" evidence="2">
    <location>
        <position position="285"/>
    </location>
</feature>
<feature type="glycosylation site" description="N-linked (GlcNAc...) asparagine" evidence="2">
    <location>
        <position position="593"/>
    </location>
</feature>
<feature type="glycosylation site" description="N-linked (GlcNAc...) asparagine" evidence="2">
    <location>
        <position position="625"/>
    </location>
</feature>
<feature type="glycosylation site" description="N-linked (GlcNAc...) asparagine" evidence="2">
    <location>
        <position position="657"/>
    </location>
</feature>
<feature type="glycosylation site" description="N-linked (GlcNAc...) asparagine" evidence="2">
    <location>
        <position position="733"/>
    </location>
</feature>
<feature type="glycosylation site" description="N-linked (GlcNAc...) asparagine" evidence="2">
    <location>
        <position position="793"/>
    </location>
</feature>
<feature type="glycosylation site" description="N-linked (GlcNAc...) asparagine" evidence="2">
    <location>
        <position position="875"/>
    </location>
</feature>
<feature type="glycosylation site" description="N-linked (GlcNAc...) asparagine" evidence="2">
    <location>
        <position position="977"/>
    </location>
</feature>
<feature type="sequence conflict" description="In Ref. 1; AA sequence." evidence="4" ref="1">
    <original>D</original>
    <variation>A</variation>
    <location>
        <position position="945"/>
    </location>
</feature>
<proteinExistence type="evidence at protein level"/>
<gene>
    <name type="primary">MAN2B2</name>
</gene>
<organism>
    <name type="scientific">Sus scrofa</name>
    <name type="common">Pig</name>
    <dbReference type="NCBI Taxonomy" id="9823"/>
    <lineage>
        <taxon>Eukaryota</taxon>
        <taxon>Metazoa</taxon>
        <taxon>Chordata</taxon>
        <taxon>Craniata</taxon>
        <taxon>Vertebrata</taxon>
        <taxon>Euteleostomi</taxon>
        <taxon>Mammalia</taxon>
        <taxon>Eutheria</taxon>
        <taxon>Laurasiatheria</taxon>
        <taxon>Artiodactyla</taxon>
        <taxon>Suina</taxon>
        <taxon>Suidae</taxon>
        <taxon>Sus</taxon>
    </lineage>
</organism>
<reference key="1">
    <citation type="journal article" date="1995" name="Mol. Reprod. Dev.">
        <title>Cloning of complementary DNA encoding a 135-kilodalton protein secreted from porcine corpus epididymis and its identification as an epididymis-specific alpha-mannosidase.</title>
        <authorList>
            <person name="Okamura N."/>
            <person name="Tamba M."/>
            <person name="Liao H.-J."/>
            <person name="Onoe S."/>
            <person name="Sugita Y."/>
            <person name="Dacheux F."/>
            <person name="Dacheux J.-L."/>
        </authorList>
    </citation>
    <scope>NUCLEOTIDE SEQUENCE [MRNA]</scope>
    <scope>PARTIAL PROTEIN SEQUENCE</scope>
    <source>
        <tissue>Epididymis</tissue>
    </source>
</reference>
<evidence type="ECO:0000250" key="1"/>
<evidence type="ECO:0000255" key="2"/>
<evidence type="ECO:0000256" key="3">
    <source>
        <dbReference type="SAM" id="MobiDB-lite"/>
    </source>
</evidence>
<evidence type="ECO:0000305" key="4"/>
<accession>Q28949</accession>
<protein>
    <recommendedName>
        <fullName>Epididymis-specific alpha-mannosidase</fullName>
        <ecNumber>3.2.1.24</ecNumber>
    </recommendedName>
    <alternativeName>
        <fullName>Mannosidase alpha class 2B member 2</fullName>
    </alternativeName>
</protein>
<name>MA2B2_PIG</name>
<dbReference type="EC" id="3.2.1.24"/>
<dbReference type="EMBL" id="D28521">
    <property type="protein sequence ID" value="BAA05877.1"/>
    <property type="status" value="ALT_INIT"/>
    <property type="molecule type" value="mRNA"/>
</dbReference>
<dbReference type="PIR" id="T42762">
    <property type="entry name" value="T42762"/>
</dbReference>
<dbReference type="RefSeq" id="NP_999014.1">
    <property type="nucleotide sequence ID" value="NM_213849.1"/>
</dbReference>
<dbReference type="SMR" id="Q28949"/>
<dbReference type="FunCoup" id="Q28949">
    <property type="interactions" value="388"/>
</dbReference>
<dbReference type="STRING" id="9823.ENSSSCP00000065480"/>
<dbReference type="CAZy" id="GH38">
    <property type="family name" value="Glycoside Hydrolase Family 38"/>
</dbReference>
<dbReference type="GlyCosmos" id="Q28949">
    <property type="glycosylation" value="8 sites, No reported glycans"/>
</dbReference>
<dbReference type="GlyGen" id="Q28949">
    <property type="glycosylation" value="8 sites"/>
</dbReference>
<dbReference type="PaxDb" id="9823-ENSSSCP00000023573"/>
<dbReference type="PeptideAtlas" id="Q28949"/>
<dbReference type="GeneID" id="396847"/>
<dbReference type="KEGG" id="ssc:396847"/>
<dbReference type="CTD" id="23324"/>
<dbReference type="eggNOG" id="KOG1959">
    <property type="taxonomic scope" value="Eukaryota"/>
</dbReference>
<dbReference type="InParanoid" id="Q28949"/>
<dbReference type="OrthoDB" id="2016903at2759"/>
<dbReference type="Proteomes" id="UP000008227">
    <property type="component" value="Unplaced"/>
</dbReference>
<dbReference type="Proteomes" id="UP000314985">
    <property type="component" value="Unplaced"/>
</dbReference>
<dbReference type="Proteomes" id="UP000694570">
    <property type="component" value="Unplaced"/>
</dbReference>
<dbReference type="Proteomes" id="UP000694571">
    <property type="component" value="Unplaced"/>
</dbReference>
<dbReference type="Proteomes" id="UP000694720">
    <property type="component" value="Unplaced"/>
</dbReference>
<dbReference type="Proteomes" id="UP000694722">
    <property type="component" value="Unplaced"/>
</dbReference>
<dbReference type="Proteomes" id="UP000694723">
    <property type="component" value="Unplaced"/>
</dbReference>
<dbReference type="Proteomes" id="UP000694724">
    <property type="component" value="Unplaced"/>
</dbReference>
<dbReference type="Proteomes" id="UP000694725">
    <property type="component" value="Unplaced"/>
</dbReference>
<dbReference type="Proteomes" id="UP000694726">
    <property type="component" value="Unplaced"/>
</dbReference>
<dbReference type="Proteomes" id="UP000694727">
    <property type="component" value="Unplaced"/>
</dbReference>
<dbReference type="Proteomes" id="UP000694728">
    <property type="component" value="Unplaced"/>
</dbReference>
<dbReference type="GO" id="GO:0005576">
    <property type="term" value="C:extracellular region"/>
    <property type="evidence" value="ECO:0007669"/>
    <property type="project" value="UniProtKB-SubCell"/>
</dbReference>
<dbReference type="GO" id="GO:0005764">
    <property type="term" value="C:lysosome"/>
    <property type="evidence" value="ECO:0000318"/>
    <property type="project" value="GO_Central"/>
</dbReference>
<dbReference type="GO" id="GO:0004559">
    <property type="term" value="F:alpha-mannosidase activity"/>
    <property type="evidence" value="ECO:0000318"/>
    <property type="project" value="GO_Central"/>
</dbReference>
<dbReference type="GO" id="GO:0030246">
    <property type="term" value="F:carbohydrate binding"/>
    <property type="evidence" value="ECO:0007669"/>
    <property type="project" value="InterPro"/>
</dbReference>
<dbReference type="GO" id="GO:0046872">
    <property type="term" value="F:metal ion binding"/>
    <property type="evidence" value="ECO:0007669"/>
    <property type="project" value="UniProtKB-KW"/>
</dbReference>
<dbReference type="GO" id="GO:0006013">
    <property type="term" value="P:mannose metabolic process"/>
    <property type="evidence" value="ECO:0007669"/>
    <property type="project" value="InterPro"/>
</dbReference>
<dbReference type="FunFam" id="1.20.1270.50:FF:000005">
    <property type="entry name" value="Alpha-mannosidase"/>
    <property type="match status" value="1"/>
</dbReference>
<dbReference type="FunFam" id="2.60.40.1360:FF:000003">
    <property type="entry name" value="Alpha-mannosidase"/>
    <property type="match status" value="1"/>
</dbReference>
<dbReference type="FunFam" id="2.70.98.30:FF:000005">
    <property type="entry name" value="Alpha-mannosidase"/>
    <property type="match status" value="1"/>
</dbReference>
<dbReference type="FunFam" id="3.20.110.10:FF:000004">
    <property type="entry name" value="Alpha-mannosidase"/>
    <property type="match status" value="1"/>
</dbReference>
<dbReference type="Gene3D" id="2.60.40.1360">
    <property type="match status" value="1"/>
</dbReference>
<dbReference type="Gene3D" id="3.20.110.10">
    <property type="entry name" value="Glycoside hydrolase 38, N terminal domain"/>
    <property type="match status" value="1"/>
</dbReference>
<dbReference type="Gene3D" id="1.20.1270.50">
    <property type="entry name" value="Glycoside hydrolase family 38, central domain"/>
    <property type="match status" value="1"/>
</dbReference>
<dbReference type="Gene3D" id="2.60.40.1180">
    <property type="entry name" value="Golgi alpha-mannosidase II"/>
    <property type="match status" value="1"/>
</dbReference>
<dbReference type="Gene3D" id="2.70.98.30">
    <property type="entry name" value="Golgi alpha-mannosidase II, domain 4"/>
    <property type="match status" value="1"/>
</dbReference>
<dbReference type="InterPro" id="IPR011013">
    <property type="entry name" value="Gal_mutarotase_sf_dom"/>
</dbReference>
<dbReference type="InterPro" id="IPR011330">
    <property type="entry name" value="Glyco_hydro/deAcase_b/a-brl"/>
</dbReference>
<dbReference type="InterPro" id="IPR011682">
    <property type="entry name" value="Glyco_hydro_38_C"/>
</dbReference>
<dbReference type="InterPro" id="IPR015341">
    <property type="entry name" value="Glyco_hydro_38_cen"/>
</dbReference>
<dbReference type="InterPro" id="IPR037094">
    <property type="entry name" value="Glyco_hydro_38_cen_sf"/>
</dbReference>
<dbReference type="InterPro" id="IPR000602">
    <property type="entry name" value="Glyco_hydro_38_N"/>
</dbReference>
<dbReference type="InterPro" id="IPR027291">
    <property type="entry name" value="Glyco_hydro_38_N_sf"/>
</dbReference>
<dbReference type="InterPro" id="IPR028995">
    <property type="entry name" value="Glyco_hydro_57/38_cen_sf"/>
</dbReference>
<dbReference type="InterPro" id="IPR013780">
    <property type="entry name" value="Glyco_hydro_b"/>
</dbReference>
<dbReference type="InterPro" id="IPR050843">
    <property type="entry name" value="Glycosyl_Hydrlase_38"/>
</dbReference>
<dbReference type="PANTHER" id="PTHR11607">
    <property type="entry name" value="ALPHA-MANNOSIDASE"/>
    <property type="match status" value="1"/>
</dbReference>
<dbReference type="PANTHER" id="PTHR11607:SF28">
    <property type="entry name" value="EPIDIDYMIS-SPECIFIC ALPHA-MANNOSIDASE"/>
    <property type="match status" value="1"/>
</dbReference>
<dbReference type="Pfam" id="PF09261">
    <property type="entry name" value="Alpha-mann_mid"/>
    <property type="match status" value="1"/>
</dbReference>
<dbReference type="Pfam" id="PF07748">
    <property type="entry name" value="Glyco_hydro_38C"/>
    <property type="match status" value="1"/>
</dbReference>
<dbReference type="Pfam" id="PF01074">
    <property type="entry name" value="Glyco_hydro_38N"/>
    <property type="match status" value="1"/>
</dbReference>
<dbReference type="SMART" id="SM00872">
    <property type="entry name" value="Alpha-mann_mid"/>
    <property type="match status" value="1"/>
</dbReference>
<dbReference type="SUPFAM" id="SSF88688">
    <property type="entry name" value="Families 57/38 glycoside transferase middle domain"/>
    <property type="match status" value="1"/>
</dbReference>
<dbReference type="SUPFAM" id="SSF74650">
    <property type="entry name" value="Galactose mutarotase-like"/>
    <property type="match status" value="1"/>
</dbReference>
<dbReference type="SUPFAM" id="SSF88713">
    <property type="entry name" value="Glycoside hydrolase/deacetylase"/>
    <property type="match status" value="1"/>
</dbReference>
<sequence>MGPHSWLPLFMQLALLGPQWALHFYKVKVFVVPHSHMDVGWLHTVQESMQVYVPDVYNSVVEALTRGKRRRFIAVEQEYFRLWWDGFASAKRKQQVRQLLAEQRLEFVLGGQVMHDEAVTHFDDQILQLTEGHGFLYETFGIRPQFSWQVDPFGASATTPTLLALAGFNGHIISRIDYDLKDTMQHTQGLQFVWRGSRSLEARQEIFTHVLDQYSYCSDGFMWNGSPRFPDRPFDMDYSAVEMPVSQDSMNHYVLNLVDNVNKRAAWFRTQHVLWPWGCDRQFFNASQQFANMDRLMDHINKHTPELGISMQYATLAEYFQAVFAQDVSWQVRDHRDFLPYSSAPEQTWTGFYTSQSGLKRLARRASALLYAGESLFTRYMLSAAHRFLDPAWALTQLQQLRWAVSEVQHHDGITGTHILAVRDMFVEHLTTGMAGVRKLMDSIAQDMPLTHSGPEPGGHVAMVYNPLAWTVTTVITLTVSFPEVSVTDESGRPVLAQVQDSKETPSAYDLHVLTTIPGLSYQHYIIKPIRKAREDSQEAAATVPSTIQFGLKLRRQDGQVGRNLVPVKNSCYTVFLDKDTNLMHSIWERQSNRTVRMSQEFLAYRSVYGYEEAVTSDNYLFTPNGTAEPAWAAVRMEVVEGQLLSEIRQYFYRQANDSDHTYAIYSRLAHGPQDSAGELLCHRIEQEYRVGPLELNHEVVLRTSTSLNTGLVLYSDNNGYQMQRRTYRHDRNNSVSLNYYPMAQSAFIQDGGSRLVLLSEQAHGVSSQGNGQVEVMLHRRLWNKLEWTLQYNLTHDVTSVVRPVLWLLLGPRTLTTGLRQRSGLELQHRPVVLFRELGGTVQNGPGPRKQEPVTLPPSLHLQILSIPGWKYSSNHTVHLKNLQKGHYRRAKADFRRVLLRLHHLYEAGEHQALSRPVTLNLQSVLRGLGSVVAVEERSLTGTWDVNSLHRWSWKTEDGHHHRGSSRRPLPPLRGPNVTIHPKEIRTFFIHFQEQ</sequence>
<keyword id="KW-0903">Direct protein sequencing</keyword>
<keyword id="KW-0325">Glycoprotein</keyword>
<keyword id="KW-0326">Glycosidase</keyword>
<keyword id="KW-0378">Hydrolase</keyword>
<keyword id="KW-0479">Metal-binding</keyword>
<keyword id="KW-1185">Reference proteome</keyword>
<keyword id="KW-0964">Secreted</keyword>
<keyword id="KW-0732">Signal</keyword>
<keyword id="KW-0862">Zinc</keyword>